<proteinExistence type="inferred from homology"/>
<comment type="function">
    <text evidence="1">Antimicrobial protein that is an integral component of the innate immune system (By similarity). Binds to bacterial lipopolysaccharides (LPS) (By similarity). Acts via neutrophil N-formyl peptide receptors to enhance the release of CXCL2 (By similarity). Postsecretory processing generates multiple cathelicidin antimicrobial peptides with various lengths which act as a topical antimicrobial defense in sweat on skin (By similarity). The unprocessed precursor form, cathelicidin antimicrobial peptide, inhibits the growth of Gram-negative E.coli and E.aerogenes with efficiencies comparable to that of the mature peptide LL-37 (in vitro) (By similarity).</text>
</comment>
<comment type="function">
    <molecule>Antibacterial peptide LL-37</molecule>
    <text evidence="1">Antimicrobial peptide that is an integral component of the innate immune system (By similarity). Binds to bacterial lipopolysaccharides (LPS) (By similarity). Causes membrane permeabilization by forming transmembrane pores (in vitro) (By similarity). Causes lysis of E.coli (By similarity). Exhibits antimicrobial activity against Gram-negative bacteria such as P.aeruginosa, S.typhimurium, E.aerogenes, E.coli and P.syringae, Gram-positive bacteria such as L.monocytogenes, S.epidermidis, S.pyogenes and S.aureus, as well as vancomycin-resistant enterococci (in vitro) (By similarity). Exhibits antimicrobial activity against methicillin-resistant S.aureus, P.mirabilis, and C.albicans in low-salt media, but not in media containing 100 mM NaCl (in vitro) (By similarity). Forms chiral supramolecular assemblies with quinolone signal (PQS) molecules of P.aeruginosa, which may lead to interference of bacterial quorum signaling and perturbance of bacterial biofilm formation (By similarity). May form supramolecular fiber-like assemblies on bacterial membranes (By similarity). Induces cytokine and chemokine producation as well as TNF/TNFA and CSF2/GMCSF production in normal human keratinocytes (By similarity). Exhibits hemolytic activity against red blood cells (By similarity).</text>
</comment>
<comment type="function">
    <molecule>Antibacterial peptide FALL-39</molecule>
    <text evidence="1">Exhibits antimicrobial activity against E.coli and B.megaterium (in vitro).</text>
</comment>
<comment type="subunit">
    <molecule>Antibacterial peptide LL-37</molecule>
    <text evidence="1">Monomer, homodimer or homotrimer (in vitro) (By similarity). Oligomerizes as tetra- or hexamer in solution (in vitro) (By similarity).</text>
</comment>
<comment type="subcellular location">
    <subcellularLocation>
        <location evidence="2">Secreted</location>
    </subcellularLocation>
    <subcellularLocation>
        <location evidence="2">Vesicle</location>
    </subcellularLocation>
    <text evidence="2">Stored as pro-peptide in granules and phagolysosomes of neutrophils (By similarity). Secreted in sweat onto skin (By similarity).</text>
</comment>
<comment type="domain">
    <text evidence="2">The cathelin-like domain (CLD), which is the propeptide part, does not seem to exhibit auto-inhibitory function, as it does not inhibit the antibacterial activity of antibacterial peptide LL-37.</text>
</comment>
<comment type="domain">
    <molecule>Antibacterial peptide LL-37</molecule>
    <text evidence="2">Undergoes conformational change in the presence of lipid A, transitioning from a random coil to an alpha-helical structure.</text>
</comment>
<comment type="domain">
    <molecule>Antibacterial peptide LL-37</molecule>
    <text evidence="2">Residues 17-29 of LL-37 represent the active core of the antimicrobial peptide. Forms ribbon-like fibrils and exhibits antibacterial activity against Gram-positive M.luteus (By similarity). Also exhibits antibacterial activity against Gram-negative E.coli and P.fluorescens (By similarity).</text>
</comment>
<comment type="PTM">
    <text evidence="1">Proteolytically cleaved by proteinase PRTN3 into antibacterial peptide LL-37 (By similarity). Proteolytically cleaved by cathepsin CTSG and neutrophil elastase ELANE (By similarity).</text>
</comment>
<comment type="PTM">
    <molecule>Antibacterial peptide LL-37</molecule>
    <text evidence="1">Resistant to proteolytic degradation in solution, and when bound to both zwitterionic (mimicking mammalian membranes) and negatively charged membranes (mimicking bacterial membranes).</text>
</comment>
<comment type="PTM">
    <text evidence="1">After secretion onto the skin surface, the CAMP gene product is processed by a serine protease-dependent mechanism into multiple novel antimicrobial peptides distinct from and shorter than cathelicidin LL-37 (By similarity). These peptides show enhanced antimicrobial action, acquiring the ability to kill skin pathogens such as S.aureus, E.coli and C.albicans. These peptides have lost the ability to stimulate CXCL8/IL8 release from keratinocytes (By similarity). The peptides act synergistically, killing bacteria at lower concentrations when present together, and maintain activity at increased salt condition (By similarity).</text>
</comment>
<comment type="similarity">
    <text evidence="4">Belongs to the cathelicidin family.</text>
</comment>
<dbReference type="EMBL" id="DQ471368">
    <property type="protein sequence ID" value="ABE96632.1"/>
    <property type="molecule type" value="Genomic_DNA"/>
</dbReference>
<dbReference type="SMR" id="Q1KLX4"/>
<dbReference type="GO" id="GO:0005615">
    <property type="term" value="C:extracellular space"/>
    <property type="evidence" value="ECO:0007669"/>
    <property type="project" value="TreeGrafter"/>
</dbReference>
<dbReference type="GO" id="GO:0031982">
    <property type="term" value="C:vesicle"/>
    <property type="evidence" value="ECO:0007669"/>
    <property type="project" value="UniProtKB-SubCell"/>
</dbReference>
<dbReference type="GO" id="GO:0001530">
    <property type="term" value="F:lipopolysaccharide binding"/>
    <property type="evidence" value="ECO:0007669"/>
    <property type="project" value="TreeGrafter"/>
</dbReference>
<dbReference type="GO" id="GO:0061844">
    <property type="term" value="P:antimicrobial humoral immune response mediated by antimicrobial peptide"/>
    <property type="evidence" value="ECO:0007669"/>
    <property type="project" value="TreeGrafter"/>
</dbReference>
<dbReference type="GO" id="GO:0050829">
    <property type="term" value="P:defense response to Gram-negative bacterium"/>
    <property type="evidence" value="ECO:0007669"/>
    <property type="project" value="TreeGrafter"/>
</dbReference>
<dbReference type="GO" id="GO:0050830">
    <property type="term" value="P:defense response to Gram-positive bacterium"/>
    <property type="evidence" value="ECO:0007669"/>
    <property type="project" value="TreeGrafter"/>
</dbReference>
<dbReference type="GO" id="GO:0045087">
    <property type="term" value="P:innate immune response"/>
    <property type="evidence" value="ECO:0007669"/>
    <property type="project" value="UniProtKB-KW"/>
</dbReference>
<dbReference type="GO" id="GO:0042119">
    <property type="term" value="P:neutrophil activation"/>
    <property type="evidence" value="ECO:0000250"/>
    <property type="project" value="UniProtKB"/>
</dbReference>
<dbReference type="FunFam" id="3.10.450.10:FF:000003">
    <property type="entry name" value="Cathelicidin antimicrobial peptide"/>
    <property type="match status" value="1"/>
</dbReference>
<dbReference type="Gene3D" id="3.10.450.10">
    <property type="match status" value="1"/>
</dbReference>
<dbReference type="InterPro" id="IPR001894">
    <property type="entry name" value="Cathelicidin-like"/>
</dbReference>
<dbReference type="InterPro" id="IPR018216">
    <property type="entry name" value="Cathelicidin_CS"/>
</dbReference>
<dbReference type="InterPro" id="IPR022746">
    <property type="entry name" value="Cathlecidin_C"/>
</dbReference>
<dbReference type="InterPro" id="IPR046350">
    <property type="entry name" value="Cystatin_sf"/>
</dbReference>
<dbReference type="PANTHER" id="PTHR10206">
    <property type="entry name" value="CATHELICIDIN"/>
    <property type="match status" value="1"/>
</dbReference>
<dbReference type="PANTHER" id="PTHR10206:SF2">
    <property type="entry name" value="CATHELICIDIN ANTIMICROBIAL PEPTIDE"/>
    <property type="match status" value="1"/>
</dbReference>
<dbReference type="Pfam" id="PF12153">
    <property type="entry name" value="CAP18_C"/>
    <property type="match status" value="1"/>
</dbReference>
<dbReference type="Pfam" id="PF00666">
    <property type="entry name" value="Cathelicidins"/>
    <property type="match status" value="1"/>
</dbReference>
<dbReference type="SUPFAM" id="SSF54403">
    <property type="entry name" value="Cystatin/monellin"/>
    <property type="match status" value="1"/>
</dbReference>
<dbReference type="PROSITE" id="PS00946">
    <property type="entry name" value="CATHELICIDINS_1"/>
    <property type="match status" value="1"/>
</dbReference>
<dbReference type="PROSITE" id="PS00947">
    <property type="entry name" value="CATHELICIDINS_2"/>
    <property type="match status" value="1"/>
</dbReference>
<name>CAMP_TRAOB</name>
<accession>Q1KLX4</accession>
<protein>
    <recommendedName>
        <fullName evidence="1">Cathelicidin antimicrobial peptide</fullName>
    </recommendedName>
    <component>
        <recommendedName>
            <fullName evidence="1">Antibacterial peptide FALL-39</fullName>
        </recommendedName>
        <alternativeName>
            <fullName evidence="1">FALL-39 peptide antibiotic</fullName>
        </alternativeName>
    </component>
    <component>
        <recommendedName>
            <fullName evidence="1">Antibacterial peptide LL-37</fullName>
        </recommendedName>
    </component>
</protein>
<sequence>MKTQRHGPSLGRWSLVLLLLGLVMPLAIVAQVLSYQEAVLRAIDGINQRSSDANLYRLLDLDPRPTMDGDPDTPKPVSFTVKETVCPRTTQKSPQDCDFKEDGLVKRCVGTVTLNQARDSFDISCDKDNRRFARLGNFFRKAKKKIGRGLKKIGQKIKDFLGNLVPRTES</sequence>
<gene>
    <name evidence="1" type="primary">CAMP</name>
</gene>
<reference key="1">
    <citation type="journal article" date="2006" name="J. Biol. Chem.">
        <title>Evolution of the primate cathelicidin. Correlation between structural variations and antimicrobial activity.</title>
        <authorList>
            <person name="Zelezetsky I."/>
            <person name="Pontillo A."/>
            <person name="Puzzi L."/>
            <person name="Antcheva N."/>
            <person name="Segat L."/>
            <person name="Pacor S."/>
            <person name="Crovella S."/>
            <person name="Tossi A."/>
        </authorList>
    </citation>
    <scope>NUCLEOTIDE SEQUENCE [GENOMIC DNA]</scope>
</reference>
<evidence type="ECO:0000250" key="1">
    <source>
        <dbReference type="UniProtKB" id="P49913"/>
    </source>
</evidence>
<evidence type="ECO:0000250" key="2">
    <source>
        <dbReference type="UniProtKB" id="P54229"/>
    </source>
</evidence>
<evidence type="ECO:0000255" key="3"/>
<evidence type="ECO:0000305" key="4"/>
<keyword id="KW-0044">Antibiotic</keyword>
<keyword id="KW-0929">Antimicrobial</keyword>
<keyword id="KW-0165">Cleavage on pair of basic residues</keyword>
<keyword id="KW-1015">Disulfide bond</keyword>
<keyword id="KW-0391">Immunity</keyword>
<keyword id="KW-0399">Innate immunity</keyword>
<keyword id="KW-0964">Secreted</keyword>
<keyword id="KW-0732">Signal</keyword>
<organism>
    <name type="scientific">Trachypithecus obscurus</name>
    <name type="common">Dusky leaf-monkey</name>
    <name type="synonym">Presbytis obscura</name>
    <dbReference type="NCBI Taxonomy" id="54181"/>
    <lineage>
        <taxon>Eukaryota</taxon>
        <taxon>Metazoa</taxon>
        <taxon>Chordata</taxon>
        <taxon>Craniata</taxon>
        <taxon>Vertebrata</taxon>
        <taxon>Euteleostomi</taxon>
        <taxon>Mammalia</taxon>
        <taxon>Eutheria</taxon>
        <taxon>Euarchontoglires</taxon>
        <taxon>Primates</taxon>
        <taxon>Haplorrhini</taxon>
        <taxon>Catarrhini</taxon>
        <taxon>Cercopithecidae</taxon>
        <taxon>Colobinae</taxon>
        <taxon>Trachypithecus</taxon>
    </lineage>
</organism>
<feature type="signal peptide" evidence="3">
    <location>
        <begin position="1"/>
        <end position="30"/>
    </location>
</feature>
<feature type="propeptide" id="PRO_0000251788" description="Cathelin-like domain (CLD)" evidence="1">
    <location>
        <begin position="31"/>
        <end position="131"/>
    </location>
</feature>
<feature type="peptide" id="PRO_0000251789" description="Antibacterial peptide FALL-39">
    <location>
        <begin position="132"/>
        <end position="170"/>
    </location>
</feature>
<feature type="peptide" id="PRO_0000251790" description="Antibacterial peptide LL-37">
    <location>
        <begin position="134"/>
        <end position="170"/>
    </location>
</feature>
<feature type="region of interest" description="Active core" evidence="1">
    <location>
        <begin position="150"/>
        <end position="162"/>
    </location>
</feature>
<feature type="disulfide bond" evidence="1">
    <location>
        <begin position="86"/>
        <end position="97"/>
    </location>
</feature>
<feature type="disulfide bond" evidence="1">
    <location>
        <begin position="108"/>
        <end position="125"/>
    </location>
</feature>